<gene>
    <name type="primary">mirC</name>
    <name type="ORF">AN7485</name>
</gene>
<proteinExistence type="inferred from homology"/>
<evidence type="ECO:0000255" key="1"/>
<evidence type="ECO:0000256" key="2">
    <source>
        <dbReference type="SAM" id="MobiDB-lite"/>
    </source>
</evidence>
<evidence type="ECO:0000305" key="3"/>
<dbReference type="EMBL" id="AY135152">
    <property type="protein sequence ID" value="AAN08046.1"/>
    <property type="molecule type" value="Genomic_DNA"/>
</dbReference>
<dbReference type="EMBL" id="AACD01000129">
    <property type="protein sequence ID" value="EAA62065.1"/>
    <property type="molecule type" value="Genomic_DNA"/>
</dbReference>
<dbReference type="EMBL" id="BN001304">
    <property type="protein sequence ID" value="CBF79472.1"/>
    <property type="molecule type" value="Genomic_DNA"/>
</dbReference>
<dbReference type="RefSeq" id="XP_680754.1">
    <property type="nucleotide sequence ID" value="XM_675662.1"/>
</dbReference>
<dbReference type="SMR" id="Q870L3"/>
<dbReference type="STRING" id="227321.Q870L3"/>
<dbReference type="EnsemblFungi" id="CBF79472">
    <property type="protein sequence ID" value="CBF79472"/>
    <property type="gene ID" value="ANIA_07485"/>
</dbReference>
<dbReference type="KEGG" id="ani:ANIA_07485"/>
<dbReference type="VEuPathDB" id="FungiDB:AN7485"/>
<dbReference type="eggNOG" id="KOG0254">
    <property type="taxonomic scope" value="Eukaryota"/>
</dbReference>
<dbReference type="HOGENOM" id="CLU_012970_2_0_1"/>
<dbReference type="InParanoid" id="Q870L3"/>
<dbReference type="OMA" id="PWKGKGL"/>
<dbReference type="OrthoDB" id="2241241at2759"/>
<dbReference type="Proteomes" id="UP000000560">
    <property type="component" value="Chromosome IV"/>
</dbReference>
<dbReference type="GO" id="GO:0005886">
    <property type="term" value="C:plasma membrane"/>
    <property type="evidence" value="ECO:0000318"/>
    <property type="project" value="GO_Central"/>
</dbReference>
<dbReference type="GO" id="GO:0015343">
    <property type="term" value="F:siderophore-iron transmembrane transporter activity"/>
    <property type="evidence" value="ECO:0000318"/>
    <property type="project" value="GO_Central"/>
</dbReference>
<dbReference type="GO" id="GO:0010106">
    <property type="term" value="P:cellular response to iron ion starvation"/>
    <property type="evidence" value="ECO:0000270"/>
    <property type="project" value="AspGD"/>
</dbReference>
<dbReference type="GO" id="GO:0055085">
    <property type="term" value="P:transmembrane transport"/>
    <property type="evidence" value="ECO:0000318"/>
    <property type="project" value="GO_Central"/>
</dbReference>
<dbReference type="CDD" id="cd17322">
    <property type="entry name" value="MFS_ARN_like"/>
    <property type="match status" value="1"/>
</dbReference>
<dbReference type="FunFam" id="1.20.1250.20:FF:000510">
    <property type="entry name" value="Siderophore iron transporter mirC"/>
    <property type="match status" value="1"/>
</dbReference>
<dbReference type="FunFam" id="1.20.1250.20:FF:000533">
    <property type="entry name" value="Siderophore iron transporter mirC"/>
    <property type="match status" value="1"/>
</dbReference>
<dbReference type="Gene3D" id="1.20.1250.20">
    <property type="entry name" value="MFS general substrate transporter like domains"/>
    <property type="match status" value="2"/>
</dbReference>
<dbReference type="InterPro" id="IPR011701">
    <property type="entry name" value="MFS"/>
</dbReference>
<dbReference type="InterPro" id="IPR020846">
    <property type="entry name" value="MFS_dom"/>
</dbReference>
<dbReference type="InterPro" id="IPR036259">
    <property type="entry name" value="MFS_trans_sf"/>
</dbReference>
<dbReference type="PANTHER" id="PTHR23501">
    <property type="entry name" value="MAJOR FACILITATOR SUPERFAMILY"/>
    <property type="match status" value="1"/>
</dbReference>
<dbReference type="PANTHER" id="PTHR23501:SF87">
    <property type="entry name" value="SIDEROPHORE IRON TRANSPORTER 2"/>
    <property type="match status" value="1"/>
</dbReference>
<dbReference type="Pfam" id="PF07690">
    <property type="entry name" value="MFS_1"/>
    <property type="match status" value="1"/>
</dbReference>
<dbReference type="SUPFAM" id="SSF103473">
    <property type="entry name" value="MFS general substrate transporter"/>
    <property type="match status" value="1"/>
</dbReference>
<dbReference type="PROSITE" id="PS50850">
    <property type="entry name" value="MFS"/>
    <property type="match status" value="1"/>
</dbReference>
<sequence>MPLLEPSATAYGTFGDMRPDTEDEGERLLTDGYVSDDDGSAVTSVDSVQEGVRKIEAINITWTTRSLVIAYISIFLMAFCTSLEGQTIMSLSAYATSAFSKHSLISTVLVVQNVVNAVIKPPMAKIADVFGRFEAFCVSILIYVLGYIQMAASTNVQTYASAQIFYAAGSTGLQILQQVFIADSSSLLNRALLALLPELPFLVTVWIGPTIADVVLENSSWRWGYGMWSIILPASFLPLALSLLLNQRKAKRLNLIKERPHHRRGFVAAVRRTWYDLDIFGLALLSAAVTLILVPLTLAANTKNGWKSNSIVAMIVIGVVCLILLPFWETSKKLAPKPLLSLHLLKQRTALAGCCLAFFYFMAFYFSVQPYLYSYLQVVQGYDVATAGRVTQTFAFTSTIAAFGVSILIKYTRRYRVYVTLGCVIYMTGLLLMLLYRKEGSSPLQVLGTQVIVGMGGGLLNVPVQLGVQASASHQEVAAATAMFLTSMEMGGAVGAAISGAVWTHNIPRKLNLYLPDEYKSEAGAIFGKLTKALSYEMGTPVRSAINRSYQETMNKLLVLALLATLPLIPLSLLMSNYKLDKMSESSDHDDASPRNGLGPGERAKRT</sequence>
<organism>
    <name type="scientific">Emericella nidulans (strain FGSC A4 / ATCC 38163 / CBS 112.46 / NRRL 194 / M139)</name>
    <name type="common">Aspergillus nidulans</name>
    <dbReference type="NCBI Taxonomy" id="227321"/>
    <lineage>
        <taxon>Eukaryota</taxon>
        <taxon>Fungi</taxon>
        <taxon>Dikarya</taxon>
        <taxon>Ascomycota</taxon>
        <taxon>Pezizomycotina</taxon>
        <taxon>Eurotiomycetes</taxon>
        <taxon>Eurotiomycetidae</taxon>
        <taxon>Eurotiales</taxon>
        <taxon>Aspergillaceae</taxon>
        <taxon>Aspergillus</taxon>
        <taxon>Aspergillus subgen. Nidulantes</taxon>
    </lineage>
</organism>
<keyword id="KW-0406">Ion transport</keyword>
<keyword id="KW-0408">Iron</keyword>
<keyword id="KW-0410">Iron transport</keyword>
<keyword id="KW-0472">Membrane</keyword>
<keyword id="KW-1185">Reference proteome</keyword>
<keyword id="KW-0812">Transmembrane</keyword>
<keyword id="KW-1133">Transmembrane helix</keyword>
<keyword id="KW-0813">Transport</keyword>
<accession>Q870L3</accession>
<accession>C8VBG2</accession>
<accession>Q5AW45</accession>
<reference key="1">
    <citation type="journal article" date="2003" name="Biochem. J.">
        <title>Characterization of the Aspergillus nidulans transporters for the siderophores enterobactin and triacetylfusarinine C.</title>
        <authorList>
            <person name="Haas H."/>
            <person name="Schoeser M."/>
            <person name="Lesuisse E."/>
            <person name="Ernst J.F."/>
            <person name="Parson W."/>
            <person name="Abt B."/>
            <person name="Winkelmann G."/>
            <person name="Oberegger H."/>
        </authorList>
    </citation>
    <scope>NUCLEOTIDE SEQUENCE [GENOMIC DNA]</scope>
</reference>
<reference key="2">
    <citation type="journal article" date="2005" name="Nature">
        <title>Sequencing of Aspergillus nidulans and comparative analysis with A. fumigatus and A. oryzae.</title>
        <authorList>
            <person name="Galagan J.E."/>
            <person name="Calvo S.E."/>
            <person name="Cuomo C."/>
            <person name="Ma L.-J."/>
            <person name="Wortman J.R."/>
            <person name="Batzoglou S."/>
            <person name="Lee S.-I."/>
            <person name="Bastuerkmen M."/>
            <person name="Spevak C.C."/>
            <person name="Clutterbuck J."/>
            <person name="Kapitonov V."/>
            <person name="Jurka J."/>
            <person name="Scazzocchio C."/>
            <person name="Farman M.L."/>
            <person name="Butler J."/>
            <person name="Purcell S."/>
            <person name="Harris S."/>
            <person name="Braus G.H."/>
            <person name="Draht O."/>
            <person name="Busch S."/>
            <person name="D'Enfert C."/>
            <person name="Bouchier C."/>
            <person name="Goldman G.H."/>
            <person name="Bell-Pedersen D."/>
            <person name="Griffiths-Jones S."/>
            <person name="Doonan J.H."/>
            <person name="Yu J."/>
            <person name="Vienken K."/>
            <person name="Pain A."/>
            <person name="Freitag M."/>
            <person name="Selker E.U."/>
            <person name="Archer D.B."/>
            <person name="Penalva M.A."/>
            <person name="Oakley B.R."/>
            <person name="Momany M."/>
            <person name="Tanaka T."/>
            <person name="Kumagai T."/>
            <person name="Asai K."/>
            <person name="Machida M."/>
            <person name="Nierman W.C."/>
            <person name="Denning D.W."/>
            <person name="Caddick M.X."/>
            <person name="Hynes M."/>
            <person name="Paoletti M."/>
            <person name="Fischer R."/>
            <person name="Miller B.L."/>
            <person name="Dyer P.S."/>
            <person name="Sachs M.S."/>
            <person name="Osmani S.A."/>
            <person name="Birren B.W."/>
        </authorList>
    </citation>
    <scope>NUCLEOTIDE SEQUENCE [LARGE SCALE GENOMIC DNA]</scope>
    <source>
        <strain>FGSC A4 / ATCC 38163 / CBS 112.46 / NRRL 194 / M139</strain>
    </source>
</reference>
<reference key="3">
    <citation type="journal article" date="2009" name="Fungal Genet. Biol.">
        <title>The 2008 update of the Aspergillus nidulans genome annotation: a community effort.</title>
        <authorList>
            <person name="Wortman J.R."/>
            <person name="Gilsenan J.M."/>
            <person name="Joardar V."/>
            <person name="Deegan J."/>
            <person name="Clutterbuck J."/>
            <person name="Andersen M.R."/>
            <person name="Archer D."/>
            <person name="Bencina M."/>
            <person name="Braus G."/>
            <person name="Coutinho P."/>
            <person name="von Dohren H."/>
            <person name="Doonan J."/>
            <person name="Driessen A.J."/>
            <person name="Durek P."/>
            <person name="Espeso E."/>
            <person name="Fekete E."/>
            <person name="Flipphi M."/>
            <person name="Estrada C.G."/>
            <person name="Geysens S."/>
            <person name="Goldman G."/>
            <person name="de Groot P.W."/>
            <person name="Hansen K."/>
            <person name="Harris S.D."/>
            <person name="Heinekamp T."/>
            <person name="Helmstaedt K."/>
            <person name="Henrissat B."/>
            <person name="Hofmann G."/>
            <person name="Homan T."/>
            <person name="Horio T."/>
            <person name="Horiuchi H."/>
            <person name="James S."/>
            <person name="Jones M."/>
            <person name="Karaffa L."/>
            <person name="Karanyi Z."/>
            <person name="Kato M."/>
            <person name="Keller N."/>
            <person name="Kelly D.E."/>
            <person name="Kiel J.A."/>
            <person name="Kim J.M."/>
            <person name="van der Klei I.J."/>
            <person name="Klis F.M."/>
            <person name="Kovalchuk A."/>
            <person name="Krasevec N."/>
            <person name="Kubicek C.P."/>
            <person name="Liu B."/>
            <person name="Maccabe A."/>
            <person name="Meyer V."/>
            <person name="Mirabito P."/>
            <person name="Miskei M."/>
            <person name="Mos M."/>
            <person name="Mullins J."/>
            <person name="Nelson D.R."/>
            <person name="Nielsen J."/>
            <person name="Oakley B.R."/>
            <person name="Osmani S.A."/>
            <person name="Pakula T."/>
            <person name="Paszewski A."/>
            <person name="Paulsen I."/>
            <person name="Pilsyk S."/>
            <person name="Pocsi I."/>
            <person name="Punt P.J."/>
            <person name="Ram A.F."/>
            <person name="Ren Q."/>
            <person name="Robellet X."/>
            <person name="Robson G."/>
            <person name="Seiboth B."/>
            <person name="van Solingen P."/>
            <person name="Specht T."/>
            <person name="Sun J."/>
            <person name="Taheri-Talesh N."/>
            <person name="Takeshita N."/>
            <person name="Ussery D."/>
            <person name="vanKuyk P.A."/>
            <person name="Visser H."/>
            <person name="van de Vondervoort P.J."/>
            <person name="de Vries R.P."/>
            <person name="Walton J."/>
            <person name="Xiang X."/>
            <person name="Xiong Y."/>
            <person name="Zeng A.P."/>
            <person name="Brandt B.W."/>
            <person name="Cornell M.J."/>
            <person name="van den Hondel C.A."/>
            <person name="Visser J."/>
            <person name="Oliver S.G."/>
            <person name="Turner G."/>
        </authorList>
    </citation>
    <scope>GENOME REANNOTATION</scope>
    <source>
        <strain>FGSC A4 / ATCC 38163 / CBS 112.46 / NRRL 194 / M139</strain>
    </source>
</reference>
<feature type="chain" id="PRO_0000084861" description="Siderophore iron transporter mirC">
    <location>
        <begin position="1"/>
        <end position="607"/>
    </location>
</feature>
<feature type="transmembrane region" description="Helical" evidence="1">
    <location>
        <begin position="67"/>
        <end position="89"/>
    </location>
</feature>
<feature type="transmembrane region" description="Helical" evidence="1">
    <location>
        <begin position="129"/>
        <end position="148"/>
    </location>
</feature>
<feature type="transmembrane region" description="Helical" evidence="1">
    <location>
        <begin position="186"/>
        <end position="208"/>
    </location>
</feature>
<feature type="transmembrane region" description="Helical" evidence="1">
    <location>
        <begin position="223"/>
        <end position="245"/>
    </location>
</feature>
<feature type="transmembrane region" description="Helical" evidence="1">
    <location>
        <begin position="279"/>
        <end position="301"/>
    </location>
</feature>
<feature type="transmembrane region" description="Helical" evidence="1">
    <location>
        <begin position="311"/>
        <end position="328"/>
    </location>
</feature>
<feature type="transmembrane region" description="Helical" evidence="1">
    <location>
        <begin position="349"/>
        <end position="368"/>
    </location>
</feature>
<feature type="transmembrane region" description="Helical" evidence="1">
    <location>
        <begin position="388"/>
        <end position="410"/>
    </location>
</feature>
<feature type="transmembrane region" description="Helical" evidence="1">
    <location>
        <begin position="417"/>
        <end position="436"/>
    </location>
</feature>
<feature type="transmembrane region" description="Helical" evidence="1">
    <location>
        <begin position="446"/>
        <end position="468"/>
    </location>
</feature>
<feature type="transmembrane region" description="Helical" evidence="1">
    <location>
        <begin position="481"/>
        <end position="503"/>
    </location>
</feature>
<feature type="transmembrane region" description="Helical" evidence="1">
    <location>
        <begin position="557"/>
        <end position="574"/>
    </location>
</feature>
<feature type="region of interest" description="Disordered" evidence="2">
    <location>
        <begin position="584"/>
        <end position="607"/>
    </location>
</feature>
<feature type="compositionally biased region" description="Basic and acidic residues" evidence="2">
    <location>
        <begin position="584"/>
        <end position="593"/>
    </location>
</feature>
<protein>
    <recommendedName>
        <fullName>Siderophore iron transporter mirC</fullName>
    </recommendedName>
    <alternativeName>
        <fullName>Major facilitator iron-regulated transporter C</fullName>
    </alternativeName>
</protein>
<comment type="subcellular location">
    <subcellularLocation>
        <location evidence="3">Membrane</location>
        <topology evidence="3">Multi-pass membrane protein</topology>
    </subcellularLocation>
</comment>
<comment type="similarity">
    <text evidence="3">Belongs to the major facilitator superfamily.</text>
</comment>
<name>MIRC_EMENI</name>